<comment type="function">
    <text evidence="1">Catalyzes the hydrolysis of UDP-3-O-myristoyl-N-acetylglucosamine to form UDP-3-O-myristoylglucosamine and acetate, the committed step in lipid A biosynthesis.</text>
</comment>
<comment type="catalytic activity">
    <reaction evidence="1">
        <text>a UDP-3-O-[(3R)-3-hydroxyacyl]-N-acetyl-alpha-D-glucosamine + H2O = a UDP-3-O-[(3R)-3-hydroxyacyl]-alpha-D-glucosamine + acetate</text>
        <dbReference type="Rhea" id="RHEA:67816"/>
        <dbReference type="ChEBI" id="CHEBI:15377"/>
        <dbReference type="ChEBI" id="CHEBI:30089"/>
        <dbReference type="ChEBI" id="CHEBI:137740"/>
        <dbReference type="ChEBI" id="CHEBI:173225"/>
        <dbReference type="EC" id="3.5.1.108"/>
    </reaction>
</comment>
<comment type="cofactor">
    <cofactor evidence="1">
        <name>Zn(2+)</name>
        <dbReference type="ChEBI" id="CHEBI:29105"/>
    </cofactor>
</comment>
<comment type="pathway">
    <text evidence="1">Glycolipid biosynthesis; lipid IV(A) biosynthesis; lipid IV(A) from (3R)-3-hydroxytetradecanoyl-[acyl-carrier-protein] and UDP-N-acetyl-alpha-D-glucosamine: step 2/6.</text>
</comment>
<comment type="similarity">
    <text evidence="1">Belongs to the LpxC family.</text>
</comment>
<evidence type="ECO:0000255" key="1">
    <source>
        <dbReference type="HAMAP-Rule" id="MF_00388"/>
    </source>
</evidence>
<reference key="1">
    <citation type="journal article" date="2003" name="Proc. Natl. Acad. Sci. U.S.A.">
        <title>The genome sequence of Blochmannia floridanus: comparative analysis of reduced genomes.</title>
        <authorList>
            <person name="Gil R."/>
            <person name="Silva F.J."/>
            <person name="Zientz E."/>
            <person name="Delmotte F."/>
            <person name="Gonzalez-Candelas F."/>
            <person name="Latorre A."/>
            <person name="Rausell C."/>
            <person name="Kamerbeek J."/>
            <person name="Gadau J."/>
            <person name="Hoelldobler B."/>
            <person name="van Ham R.C.H.J."/>
            <person name="Gross R."/>
            <person name="Moya A."/>
        </authorList>
    </citation>
    <scope>NUCLEOTIDE SEQUENCE [LARGE SCALE GENOMIC DNA]</scope>
</reference>
<dbReference type="EC" id="3.5.1.108" evidence="1"/>
<dbReference type="EMBL" id="BX248583">
    <property type="protein sequence ID" value="CAD83668.1"/>
    <property type="molecule type" value="Genomic_DNA"/>
</dbReference>
<dbReference type="SMR" id="Q7VQI3"/>
<dbReference type="STRING" id="203907.Bfl147"/>
<dbReference type="KEGG" id="bfl:Bfl147"/>
<dbReference type="eggNOG" id="COG0774">
    <property type="taxonomic scope" value="Bacteria"/>
</dbReference>
<dbReference type="HOGENOM" id="CLU_046528_1_0_6"/>
<dbReference type="OrthoDB" id="9802746at2"/>
<dbReference type="UniPathway" id="UPA00359">
    <property type="reaction ID" value="UER00478"/>
</dbReference>
<dbReference type="Proteomes" id="UP000002192">
    <property type="component" value="Chromosome"/>
</dbReference>
<dbReference type="GO" id="GO:0016020">
    <property type="term" value="C:membrane"/>
    <property type="evidence" value="ECO:0007669"/>
    <property type="project" value="GOC"/>
</dbReference>
<dbReference type="GO" id="GO:0046872">
    <property type="term" value="F:metal ion binding"/>
    <property type="evidence" value="ECO:0007669"/>
    <property type="project" value="UniProtKB-KW"/>
</dbReference>
<dbReference type="GO" id="GO:0103117">
    <property type="term" value="F:UDP-3-O-acyl-N-acetylglucosamine deacetylase activity"/>
    <property type="evidence" value="ECO:0007669"/>
    <property type="project" value="UniProtKB-UniRule"/>
</dbReference>
<dbReference type="GO" id="GO:0009245">
    <property type="term" value="P:lipid A biosynthetic process"/>
    <property type="evidence" value="ECO:0007669"/>
    <property type="project" value="UniProtKB-UniRule"/>
</dbReference>
<dbReference type="Gene3D" id="3.30.230.20">
    <property type="entry name" value="lpxc deacetylase, domain 1"/>
    <property type="match status" value="1"/>
</dbReference>
<dbReference type="Gene3D" id="3.30.1700.10">
    <property type="entry name" value="lpxc deacetylase, domain 2"/>
    <property type="match status" value="1"/>
</dbReference>
<dbReference type="HAMAP" id="MF_00388">
    <property type="entry name" value="LpxC"/>
    <property type="match status" value="1"/>
</dbReference>
<dbReference type="InterPro" id="IPR020568">
    <property type="entry name" value="Ribosomal_Su5_D2-typ_SF"/>
</dbReference>
<dbReference type="InterPro" id="IPR004463">
    <property type="entry name" value="UDP-acyl_GlcNac_deAcase"/>
</dbReference>
<dbReference type="InterPro" id="IPR011334">
    <property type="entry name" value="UDP-acyl_GlcNac_deAcase_C"/>
</dbReference>
<dbReference type="InterPro" id="IPR015870">
    <property type="entry name" value="UDP-acyl_N-AcGlcN_deAcase_N"/>
</dbReference>
<dbReference type="NCBIfam" id="TIGR00325">
    <property type="entry name" value="lpxC"/>
    <property type="match status" value="1"/>
</dbReference>
<dbReference type="PANTHER" id="PTHR33694">
    <property type="entry name" value="UDP-3-O-ACYL-N-ACETYLGLUCOSAMINE DEACETYLASE 1, MITOCHONDRIAL-RELATED"/>
    <property type="match status" value="1"/>
</dbReference>
<dbReference type="PANTHER" id="PTHR33694:SF1">
    <property type="entry name" value="UDP-3-O-ACYL-N-ACETYLGLUCOSAMINE DEACETYLASE 1, MITOCHONDRIAL-RELATED"/>
    <property type="match status" value="1"/>
</dbReference>
<dbReference type="Pfam" id="PF03331">
    <property type="entry name" value="LpxC"/>
    <property type="match status" value="1"/>
</dbReference>
<dbReference type="SUPFAM" id="SSF54211">
    <property type="entry name" value="Ribosomal protein S5 domain 2-like"/>
    <property type="match status" value="2"/>
</dbReference>
<gene>
    <name evidence="1" type="primary">lpxC</name>
    <name type="ordered locus">Bfl147</name>
</gene>
<accession>Q7VQI3</accession>
<protein>
    <recommendedName>
        <fullName evidence="1">UDP-3-O-acyl-N-acetylglucosamine deacetylase</fullName>
        <shortName evidence="1">UDP-3-O-acyl-GlcNAc deacetylase</shortName>
        <ecNumber evidence="1">3.5.1.108</ecNumber>
    </recommendedName>
    <alternativeName>
        <fullName evidence="1">UDP-3-O-[R-3-hydroxymyristoyl]-N-acetylglucosamine deacetylase</fullName>
    </alternativeName>
</protein>
<keyword id="KW-0378">Hydrolase</keyword>
<keyword id="KW-0441">Lipid A biosynthesis</keyword>
<keyword id="KW-0444">Lipid biosynthesis</keyword>
<keyword id="KW-0443">Lipid metabolism</keyword>
<keyword id="KW-0479">Metal-binding</keyword>
<keyword id="KW-1185">Reference proteome</keyword>
<keyword id="KW-0862">Zinc</keyword>
<feature type="chain" id="PRO_0000253644" description="UDP-3-O-acyl-N-acetylglucosamine deacetylase">
    <location>
        <begin position="1"/>
        <end position="298"/>
    </location>
</feature>
<feature type="active site" description="Proton donor" evidence="1">
    <location>
        <position position="266"/>
    </location>
</feature>
<feature type="binding site" evidence="1">
    <location>
        <position position="80"/>
    </location>
    <ligand>
        <name>Zn(2+)</name>
        <dbReference type="ChEBI" id="CHEBI:29105"/>
    </ligand>
</feature>
<feature type="binding site" evidence="1">
    <location>
        <position position="239"/>
    </location>
    <ligand>
        <name>Zn(2+)</name>
        <dbReference type="ChEBI" id="CHEBI:29105"/>
    </ligand>
</feature>
<feature type="binding site" evidence="1">
    <location>
        <position position="243"/>
    </location>
    <ligand>
        <name>Zn(2+)</name>
        <dbReference type="ChEBI" id="CHEBI:29105"/>
    </ligand>
</feature>
<proteinExistence type="inferred from homology"/>
<name>LPXC_BLOFL</name>
<organism>
    <name type="scientific">Blochmanniella floridana</name>
    <dbReference type="NCBI Taxonomy" id="203907"/>
    <lineage>
        <taxon>Bacteria</taxon>
        <taxon>Pseudomonadati</taxon>
        <taxon>Pseudomonadota</taxon>
        <taxon>Gammaproteobacteria</taxon>
        <taxon>Enterobacterales</taxon>
        <taxon>Enterobacteriaceae</taxon>
        <taxon>ant endosymbionts</taxon>
        <taxon>Candidatus Blochmanniella</taxon>
    </lineage>
</organism>
<sequence>MIKQRTLKNIVCTTGIGLHTGQEVTLTLYPALANTGIIYRRIDLNPPVDFCVNIESVGSTFLCTCLKNNTYGVQVLTVEHLSAAQSGLGIDNIIIELNGPEVPIMDGSADPFVSLLLKAGIKELNSSKNFFRLKQIVRVEDGDRWAELRPFNGFTLDFTIDYDHPVVNMKNKHYFFNFTSKSFRSEISSARTFGFVDNIQKLKNCGFVLGGSLTSSVVMDKYQVVNSEGLRFNNELVRHKILDAVGDLFMCGYNLIGSFIGFKSGHTLNNKLLRAVLARRKAWEITSCIQGCDVSKIF</sequence>